<feature type="chain" id="PRO_1000077667" description="GTPase Der">
    <location>
        <begin position="1"/>
        <end position="487"/>
    </location>
</feature>
<feature type="domain" description="EngA-type G 1">
    <location>
        <begin position="3"/>
        <end position="166"/>
    </location>
</feature>
<feature type="domain" description="EngA-type G 2">
    <location>
        <begin position="193"/>
        <end position="366"/>
    </location>
</feature>
<feature type="domain" description="KH-like" evidence="1">
    <location>
        <begin position="367"/>
        <end position="451"/>
    </location>
</feature>
<feature type="region of interest" description="Disordered" evidence="2">
    <location>
        <begin position="449"/>
        <end position="487"/>
    </location>
</feature>
<feature type="compositionally biased region" description="Basic and acidic residues" evidence="2">
    <location>
        <begin position="449"/>
        <end position="461"/>
    </location>
</feature>
<feature type="compositionally biased region" description="Basic residues" evidence="2">
    <location>
        <begin position="467"/>
        <end position="487"/>
    </location>
</feature>
<feature type="binding site" evidence="1">
    <location>
        <begin position="9"/>
        <end position="16"/>
    </location>
    <ligand>
        <name>GTP</name>
        <dbReference type="ChEBI" id="CHEBI:37565"/>
        <label>1</label>
    </ligand>
</feature>
<feature type="binding site" evidence="1">
    <location>
        <begin position="56"/>
        <end position="60"/>
    </location>
    <ligand>
        <name>GTP</name>
        <dbReference type="ChEBI" id="CHEBI:37565"/>
        <label>1</label>
    </ligand>
</feature>
<feature type="binding site" evidence="1">
    <location>
        <begin position="118"/>
        <end position="121"/>
    </location>
    <ligand>
        <name>GTP</name>
        <dbReference type="ChEBI" id="CHEBI:37565"/>
        <label>1</label>
    </ligand>
</feature>
<feature type="binding site" evidence="1">
    <location>
        <begin position="199"/>
        <end position="206"/>
    </location>
    <ligand>
        <name>GTP</name>
        <dbReference type="ChEBI" id="CHEBI:37565"/>
        <label>2</label>
    </ligand>
</feature>
<feature type="binding site" evidence="1">
    <location>
        <begin position="246"/>
        <end position="250"/>
    </location>
    <ligand>
        <name>GTP</name>
        <dbReference type="ChEBI" id="CHEBI:37565"/>
        <label>2</label>
    </ligand>
</feature>
<feature type="binding site" evidence="1">
    <location>
        <begin position="311"/>
        <end position="314"/>
    </location>
    <ligand>
        <name>GTP</name>
        <dbReference type="ChEBI" id="CHEBI:37565"/>
        <label>2</label>
    </ligand>
</feature>
<keyword id="KW-0342">GTP-binding</keyword>
<keyword id="KW-0547">Nucleotide-binding</keyword>
<keyword id="KW-0677">Repeat</keyword>
<keyword id="KW-0690">Ribosome biogenesis</keyword>
<dbReference type="EMBL" id="CP000926">
    <property type="protein sequence ID" value="ABY96810.1"/>
    <property type="molecule type" value="Genomic_DNA"/>
</dbReference>
<dbReference type="RefSeq" id="WP_012270602.1">
    <property type="nucleotide sequence ID" value="NC_010322.1"/>
</dbReference>
<dbReference type="SMR" id="B0KPJ1"/>
<dbReference type="KEGG" id="ppg:PputGB1_0900"/>
<dbReference type="eggNOG" id="COG1160">
    <property type="taxonomic scope" value="Bacteria"/>
</dbReference>
<dbReference type="HOGENOM" id="CLU_016077_6_2_6"/>
<dbReference type="Proteomes" id="UP000002157">
    <property type="component" value="Chromosome"/>
</dbReference>
<dbReference type="GO" id="GO:0005525">
    <property type="term" value="F:GTP binding"/>
    <property type="evidence" value="ECO:0007669"/>
    <property type="project" value="UniProtKB-UniRule"/>
</dbReference>
<dbReference type="GO" id="GO:0043022">
    <property type="term" value="F:ribosome binding"/>
    <property type="evidence" value="ECO:0007669"/>
    <property type="project" value="TreeGrafter"/>
</dbReference>
<dbReference type="GO" id="GO:0042254">
    <property type="term" value="P:ribosome biogenesis"/>
    <property type="evidence" value="ECO:0007669"/>
    <property type="project" value="UniProtKB-KW"/>
</dbReference>
<dbReference type="CDD" id="cd01894">
    <property type="entry name" value="EngA1"/>
    <property type="match status" value="1"/>
</dbReference>
<dbReference type="CDD" id="cd01895">
    <property type="entry name" value="EngA2"/>
    <property type="match status" value="1"/>
</dbReference>
<dbReference type="FunFam" id="3.30.300.20:FF:000004">
    <property type="entry name" value="GTPase Der"/>
    <property type="match status" value="1"/>
</dbReference>
<dbReference type="FunFam" id="3.40.50.300:FF:000040">
    <property type="entry name" value="GTPase Der"/>
    <property type="match status" value="1"/>
</dbReference>
<dbReference type="FunFam" id="3.40.50.300:FF:000057">
    <property type="entry name" value="GTPase Der"/>
    <property type="match status" value="1"/>
</dbReference>
<dbReference type="Gene3D" id="3.30.300.20">
    <property type="match status" value="1"/>
</dbReference>
<dbReference type="Gene3D" id="3.40.50.300">
    <property type="entry name" value="P-loop containing nucleotide triphosphate hydrolases"/>
    <property type="match status" value="2"/>
</dbReference>
<dbReference type="HAMAP" id="MF_00195">
    <property type="entry name" value="GTPase_Der"/>
    <property type="match status" value="1"/>
</dbReference>
<dbReference type="InterPro" id="IPR031166">
    <property type="entry name" value="G_ENGA"/>
</dbReference>
<dbReference type="InterPro" id="IPR006073">
    <property type="entry name" value="GTP-bd"/>
</dbReference>
<dbReference type="InterPro" id="IPR016484">
    <property type="entry name" value="GTPase_Der"/>
</dbReference>
<dbReference type="InterPro" id="IPR032859">
    <property type="entry name" value="KH_dom-like"/>
</dbReference>
<dbReference type="InterPro" id="IPR015946">
    <property type="entry name" value="KH_dom-like_a/b"/>
</dbReference>
<dbReference type="InterPro" id="IPR027417">
    <property type="entry name" value="P-loop_NTPase"/>
</dbReference>
<dbReference type="InterPro" id="IPR005225">
    <property type="entry name" value="Small_GTP-bd"/>
</dbReference>
<dbReference type="NCBIfam" id="TIGR03594">
    <property type="entry name" value="GTPase_EngA"/>
    <property type="match status" value="1"/>
</dbReference>
<dbReference type="NCBIfam" id="TIGR00231">
    <property type="entry name" value="small_GTP"/>
    <property type="match status" value="2"/>
</dbReference>
<dbReference type="PANTHER" id="PTHR43834">
    <property type="entry name" value="GTPASE DER"/>
    <property type="match status" value="1"/>
</dbReference>
<dbReference type="PANTHER" id="PTHR43834:SF6">
    <property type="entry name" value="GTPASE DER"/>
    <property type="match status" value="1"/>
</dbReference>
<dbReference type="Pfam" id="PF14714">
    <property type="entry name" value="KH_dom-like"/>
    <property type="match status" value="1"/>
</dbReference>
<dbReference type="Pfam" id="PF01926">
    <property type="entry name" value="MMR_HSR1"/>
    <property type="match status" value="2"/>
</dbReference>
<dbReference type="PIRSF" id="PIRSF006485">
    <property type="entry name" value="GTP-binding_EngA"/>
    <property type="match status" value="1"/>
</dbReference>
<dbReference type="PRINTS" id="PR00326">
    <property type="entry name" value="GTP1OBG"/>
</dbReference>
<dbReference type="SUPFAM" id="SSF52540">
    <property type="entry name" value="P-loop containing nucleoside triphosphate hydrolases"/>
    <property type="match status" value="2"/>
</dbReference>
<dbReference type="PROSITE" id="PS51712">
    <property type="entry name" value="G_ENGA"/>
    <property type="match status" value="2"/>
</dbReference>
<comment type="function">
    <text evidence="1">GTPase that plays an essential role in the late steps of ribosome biogenesis.</text>
</comment>
<comment type="subunit">
    <text evidence="1">Associates with the 50S ribosomal subunit.</text>
</comment>
<comment type="similarity">
    <text evidence="1">Belongs to the TRAFAC class TrmE-Era-EngA-EngB-Septin-like GTPase superfamily. EngA (Der) GTPase family.</text>
</comment>
<sequence>MVPVIALVGRPNVGKSTMFNRLTKTRDAIVGDLSGLTRDRQYGDATWQGRSFILIDTGGITGDEVGMDEKMAEQSLMAIEEADYVLFLVDARAGMTAADQMIAEHLRKRNKSAILVANKIDNIDPDVARAEFSPMGMGNAIPVAGSQGRGINALMEAVLGHLPRDAEDEALDQEVAEGEEAVRIPGPSEKDGIKIAIIGRPNVGKSTLVNRMLGEERVVVYDEPGTTRDSIYIPFERDGEKYTFIDTAGVRKRGKIHEEVEKFSVVKTLQAIKDANVVIFVMDAREGVVDHDLNLLGFALEAGRAIVIALNKWDGMEPGERAYVKTELERRLFFVDFADIHFISALHGTGVGNLYKSVQAAFKSAVTRWPTSRLTQILEDAVSEHQPPLVNGRRIKLRYAHLGGANPPLIVIHGNQTESIPKSYSRYLENTYRRVLKLVGTPIRIEYKGGENPFEGKKNTLTDRQVNKKRRLMSHHKKAEKKRRDKR</sequence>
<name>DER_PSEPG</name>
<accession>B0KPJ1</accession>
<evidence type="ECO:0000255" key="1">
    <source>
        <dbReference type="HAMAP-Rule" id="MF_00195"/>
    </source>
</evidence>
<evidence type="ECO:0000256" key="2">
    <source>
        <dbReference type="SAM" id="MobiDB-lite"/>
    </source>
</evidence>
<protein>
    <recommendedName>
        <fullName evidence="1">GTPase Der</fullName>
    </recommendedName>
    <alternativeName>
        <fullName evidence="1">GTP-binding protein EngA</fullName>
    </alternativeName>
</protein>
<reference key="1">
    <citation type="submission" date="2008-01" db="EMBL/GenBank/DDBJ databases">
        <title>Complete sequence of Pseudomonas putida GB-1.</title>
        <authorList>
            <consortium name="US DOE Joint Genome Institute"/>
            <person name="Copeland A."/>
            <person name="Lucas S."/>
            <person name="Lapidus A."/>
            <person name="Barry K."/>
            <person name="Glavina del Rio T."/>
            <person name="Dalin E."/>
            <person name="Tice H."/>
            <person name="Pitluck S."/>
            <person name="Bruce D."/>
            <person name="Goodwin L."/>
            <person name="Chertkov O."/>
            <person name="Brettin T."/>
            <person name="Detter J.C."/>
            <person name="Han C."/>
            <person name="Kuske C.R."/>
            <person name="Schmutz J."/>
            <person name="Larimer F."/>
            <person name="Land M."/>
            <person name="Hauser L."/>
            <person name="Kyrpides N."/>
            <person name="Kim E."/>
            <person name="McCarthy J.K."/>
            <person name="Richardson P."/>
        </authorList>
    </citation>
    <scope>NUCLEOTIDE SEQUENCE [LARGE SCALE GENOMIC DNA]</scope>
    <source>
        <strain>GB-1</strain>
    </source>
</reference>
<gene>
    <name evidence="1" type="primary">der</name>
    <name type="synonym">engA</name>
    <name type="ordered locus">PputGB1_0900</name>
</gene>
<proteinExistence type="inferred from homology"/>
<organism>
    <name type="scientific">Pseudomonas putida (strain GB-1)</name>
    <dbReference type="NCBI Taxonomy" id="76869"/>
    <lineage>
        <taxon>Bacteria</taxon>
        <taxon>Pseudomonadati</taxon>
        <taxon>Pseudomonadota</taxon>
        <taxon>Gammaproteobacteria</taxon>
        <taxon>Pseudomonadales</taxon>
        <taxon>Pseudomonadaceae</taxon>
        <taxon>Pseudomonas</taxon>
    </lineage>
</organism>